<dbReference type="EC" id="3.1.1.-"/>
<dbReference type="EMBL" id="AB023046">
    <property type="protein sequence ID" value="BAB01276.1"/>
    <property type="molecule type" value="Genomic_DNA"/>
</dbReference>
<dbReference type="EMBL" id="AC001645">
    <property type="protein sequence ID" value="AAB63641.1"/>
    <property type="status" value="ALT_INIT"/>
    <property type="molecule type" value="Genomic_DNA"/>
</dbReference>
<dbReference type="EMBL" id="CP002686">
    <property type="protein sequence ID" value="AEE75804.1"/>
    <property type="molecule type" value="Genomic_DNA"/>
</dbReference>
<dbReference type="EMBL" id="AY075698">
    <property type="protein sequence ID" value="AAL77704.1"/>
    <property type="molecule type" value="mRNA"/>
</dbReference>
<dbReference type="EMBL" id="BT002609">
    <property type="protein sequence ID" value="AAO11525.1"/>
    <property type="molecule type" value="mRNA"/>
</dbReference>
<dbReference type="EMBL" id="Z26539">
    <property type="protein sequence ID" value="CAA81310.1"/>
    <property type="molecule type" value="mRNA"/>
</dbReference>
<dbReference type="RefSeq" id="NP_188258.1">
    <property type="nucleotide sequence ID" value="NM_112508.5"/>
</dbReference>
<dbReference type="SMR" id="Q9LU14"/>
<dbReference type="BioGRID" id="6218">
    <property type="interactions" value="1"/>
</dbReference>
<dbReference type="FunCoup" id="Q9LU14">
    <property type="interactions" value="254"/>
</dbReference>
<dbReference type="IntAct" id="Q9LU14">
    <property type="interactions" value="1"/>
</dbReference>
<dbReference type="STRING" id="3702.Q9LU14"/>
<dbReference type="GlyCosmos" id="Q9LU14">
    <property type="glycosylation" value="2 sites, No reported glycans"/>
</dbReference>
<dbReference type="GlyGen" id="Q9LU14">
    <property type="glycosylation" value="2 sites"/>
</dbReference>
<dbReference type="SwissPalm" id="Q9LU14"/>
<dbReference type="PaxDb" id="3702-AT3G16370.1"/>
<dbReference type="ProteomicsDB" id="244450"/>
<dbReference type="EnsemblPlants" id="AT3G16370.1">
    <property type="protein sequence ID" value="AT3G16370.1"/>
    <property type="gene ID" value="AT3G16370"/>
</dbReference>
<dbReference type="GeneID" id="820884"/>
<dbReference type="Gramene" id="AT3G16370.1">
    <property type="protein sequence ID" value="AT3G16370.1"/>
    <property type="gene ID" value="AT3G16370"/>
</dbReference>
<dbReference type="KEGG" id="ath:AT3G16370"/>
<dbReference type="Araport" id="AT3G16370"/>
<dbReference type="TAIR" id="AT3G16370"/>
<dbReference type="eggNOG" id="KOG0017">
    <property type="taxonomic scope" value="Eukaryota"/>
</dbReference>
<dbReference type="HOGENOM" id="CLU_015101_0_1_1"/>
<dbReference type="InParanoid" id="Q9LU14"/>
<dbReference type="OMA" id="YQQVEYF"/>
<dbReference type="PhylomeDB" id="Q9LU14"/>
<dbReference type="BioCyc" id="ARA:AT3G16370-MONOMER"/>
<dbReference type="PRO" id="PR:Q9LU14"/>
<dbReference type="Proteomes" id="UP000006548">
    <property type="component" value="Chromosome 3"/>
</dbReference>
<dbReference type="ExpressionAtlas" id="Q9LU14">
    <property type="expression patterns" value="baseline and differential"/>
</dbReference>
<dbReference type="GO" id="GO:0048046">
    <property type="term" value="C:apoplast"/>
    <property type="evidence" value="ECO:0007005"/>
    <property type="project" value="TAIR"/>
</dbReference>
<dbReference type="GO" id="GO:0016788">
    <property type="term" value="F:hydrolase activity, acting on ester bonds"/>
    <property type="evidence" value="ECO:0007669"/>
    <property type="project" value="InterPro"/>
</dbReference>
<dbReference type="GO" id="GO:0016042">
    <property type="term" value="P:lipid catabolic process"/>
    <property type="evidence" value="ECO:0007669"/>
    <property type="project" value="UniProtKB-KW"/>
</dbReference>
<dbReference type="CDD" id="cd01837">
    <property type="entry name" value="SGNH_plant_lipase_like"/>
    <property type="match status" value="1"/>
</dbReference>
<dbReference type="FunFam" id="3.40.50.1110:FF:000003">
    <property type="entry name" value="GDSL esterase/lipase APG"/>
    <property type="match status" value="1"/>
</dbReference>
<dbReference type="Gene3D" id="3.40.50.1110">
    <property type="entry name" value="SGNH hydrolase"/>
    <property type="match status" value="1"/>
</dbReference>
<dbReference type="InterPro" id="IPR001087">
    <property type="entry name" value="GDSL"/>
</dbReference>
<dbReference type="InterPro" id="IPR050592">
    <property type="entry name" value="GDSL_lipolytic_enzyme"/>
</dbReference>
<dbReference type="InterPro" id="IPR036514">
    <property type="entry name" value="SGNH_hydro_sf"/>
</dbReference>
<dbReference type="InterPro" id="IPR035669">
    <property type="entry name" value="SGNH_plant_lipase-like"/>
</dbReference>
<dbReference type="PANTHER" id="PTHR45642">
    <property type="entry name" value="GDSL ESTERASE/LIPASE EXL3"/>
    <property type="match status" value="1"/>
</dbReference>
<dbReference type="PANTHER" id="PTHR45642:SF35">
    <property type="entry name" value="GDSL ESTERASE_LIPASE APG"/>
    <property type="match status" value="1"/>
</dbReference>
<dbReference type="Pfam" id="PF00657">
    <property type="entry name" value="Lipase_GDSL"/>
    <property type="match status" value="1"/>
</dbReference>
<dbReference type="SUPFAM" id="SSF52266">
    <property type="entry name" value="SGNH hydrolase"/>
    <property type="match status" value="1"/>
</dbReference>
<protein>
    <recommendedName>
        <fullName>GDSL esterase/lipase APG</fullName>
        <ecNumber>3.1.1.-</ecNumber>
    </recommendedName>
    <alternativeName>
        <fullName>Extracellular lipase APG</fullName>
    </alternativeName>
</protein>
<reference key="1">
    <citation type="journal article" date="2000" name="DNA Res.">
        <title>Structural analysis of Arabidopsis thaliana chromosome 3. I. Sequence features of the regions of 4,504,864 bp covered by sixty P1 and TAC clones.</title>
        <authorList>
            <person name="Sato S."/>
            <person name="Nakamura Y."/>
            <person name="Kaneko T."/>
            <person name="Katoh T."/>
            <person name="Asamizu E."/>
            <person name="Tabata S."/>
        </authorList>
    </citation>
    <scope>NUCLEOTIDE SEQUENCE [LARGE SCALE GENOMIC DNA]</scope>
    <source>
        <strain>cv. Columbia</strain>
    </source>
</reference>
<reference key="2">
    <citation type="journal article" date="2000" name="Nature">
        <title>Sequence and analysis of chromosome 3 of the plant Arabidopsis thaliana.</title>
        <authorList>
            <person name="Salanoubat M."/>
            <person name="Lemcke K."/>
            <person name="Rieger M."/>
            <person name="Ansorge W."/>
            <person name="Unseld M."/>
            <person name="Fartmann B."/>
            <person name="Valle G."/>
            <person name="Bloecker H."/>
            <person name="Perez-Alonso M."/>
            <person name="Obermaier B."/>
            <person name="Delseny M."/>
            <person name="Boutry M."/>
            <person name="Grivell L.A."/>
            <person name="Mache R."/>
            <person name="Puigdomenech P."/>
            <person name="De Simone V."/>
            <person name="Choisne N."/>
            <person name="Artiguenave F."/>
            <person name="Robert C."/>
            <person name="Brottier P."/>
            <person name="Wincker P."/>
            <person name="Cattolico L."/>
            <person name="Weissenbach J."/>
            <person name="Saurin W."/>
            <person name="Quetier F."/>
            <person name="Schaefer M."/>
            <person name="Mueller-Auer S."/>
            <person name="Gabel C."/>
            <person name="Fuchs M."/>
            <person name="Benes V."/>
            <person name="Wurmbach E."/>
            <person name="Drzonek H."/>
            <person name="Erfle H."/>
            <person name="Jordan N."/>
            <person name="Bangert S."/>
            <person name="Wiedelmann R."/>
            <person name="Kranz H."/>
            <person name="Voss H."/>
            <person name="Holland R."/>
            <person name="Brandt P."/>
            <person name="Nyakatura G."/>
            <person name="Vezzi A."/>
            <person name="D'Angelo M."/>
            <person name="Pallavicini A."/>
            <person name="Toppo S."/>
            <person name="Simionati B."/>
            <person name="Conrad A."/>
            <person name="Hornischer K."/>
            <person name="Kauer G."/>
            <person name="Loehnert T.-H."/>
            <person name="Nordsiek G."/>
            <person name="Reichelt J."/>
            <person name="Scharfe M."/>
            <person name="Schoen O."/>
            <person name="Bargues M."/>
            <person name="Terol J."/>
            <person name="Climent J."/>
            <person name="Navarro P."/>
            <person name="Collado C."/>
            <person name="Perez-Perez A."/>
            <person name="Ottenwaelder B."/>
            <person name="Duchemin D."/>
            <person name="Cooke R."/>
            <person name="Laudie M."/>
            <person name="Berger-Llauro C."/>
            <person name="Purnelle B."/>
            <person name="Masuy D."/>
            <person name="de Haan M."/>
            <person name="Maarse A.C."/>
            <person name="Alcaraz J.-P."/>
            <person name="Cottet A."/>
            <person name="Casacuberta E."/>
            <person name="Monfort A."/>
            <person name="Argiriou A."/>
            <person name="Flores M."/>
            <person name="Liguori R."/>
            <person name="Vitale D."/>
            <person name="Mannhaupt G."/>
            <person name="Haase D."/>
            <person name="Schoof H."/>
            <person name="Rudd S."/>
            <person name="Zaccaria P."/>
            <person name="Mewes H.-W."/>
            <person name="Mayer K.F.X."/>
            <person name="Kaul S."/>
            <person name="Town C.D."/>
            <person name="Koo H.L."/>
            <person name="Tallon L.J."/>
            <person name="Jenkins J."/>
            <person name="Rooney T."/>
            <person name="Rizzo M."/>
            <person name="Walts A."/>
            <person name="Utterback T."/>
            <person name="Fujii C.Y."/>
            <person name="Shea T.P."/>
            <person name="Creasy T.H."/>
            <person name="Haas B."/>
            <person name="Maiti R."/>
            <person name="Wu D."/>
            <person name="Peterson J."/>
            <person name="Van Aken S."/>
            <person name="Pai G."/>
            <person name="Militscher J."/>
            <person name="Sellers P."/>
            <person name="Gill J.E."/>
            <person name="Feldblyum T.V."/>
            <person name="Preuss D."/>
            <person name="Lin X."/>
            <person name="Nierman W.C."/>
            <person name="Salzberg S.L."/>
            <person name="White O."/>
            <person name="Venter J.C."/>
            <person name="Fraser C.M."/>
            <person name="Kaneko T."/>
            <person name="Nakamura Y."/>
            <person name="Sato S."/>
            <person name="Kato T."/>
            <person name="Asamizu E."/>
            <person name="Sasamoto S."/>
            <person name="Kimura T."/>
            <person name="Idesawa K."/>
            <person name="Kawashima K."/>
            <person name="Kishida Y."/>
            <person name="Kiyokawa C."/>
            <person name="Kohara M."/>
            <person name="Matsumoto M."/>
            <person name="Matsuno A."/>
            <person name="Muraki A."/>
            <person name="Nakayama S."/>
            <person name="Nakazaki N."/>
            <person name="Shinpo S."/>
            <person name="Takeuchi C."/>
            <person name="Wada T."/>
            <person name="Watanabe A."/>
            <person name="Yamada M."/>
            <person name="Yasuda M."/>
            <person name="Tabata S."/>
        </authorList>
    </citation>
    <scope>NUCLEOTIDE SEQUENCE [LARGE SCALE GENOMIC DNA]</scope>
    <source>
        <strain>cv. Columbia</strain>
    </source>
</reference>
<reference key="3">
    <citation type="journal article" date="2017" name="Plant J.">
        <title>Araport11: a complete reannotation of the Arabidopsis thaliana reference genome.</title>
        <authorList>
            <person name="Cheng C.Y."/>
            <person name="Krishnakumar V."/>
            <person name="Chan A.P."/>
            <person name="Thibaud-Nissen F."/>
            <person name="Schobel S."/>
            <person name="Town C.D."/>
        </authorList>
    </citation>
    <scope>GENOME REANNOTATION</scope>
    <source>
        <strain>cv. Columbia</strain>
    </source>
</reference>
<reference key="4">
    <citation type="journal article" date="2003" name="Science">
        <title>Empirical analysis of transcriptional activity in the Arabidopsis genome.</title>
        <authorList>
            <person name="Yamada K."/>
            <person name="Lim J."/>
            <person name="Dale J.M."/>
            <person name="Chen H."/>
            <person name="Shinn P."/>
            <person name="Palm C.J."/>
            <person name="Southwick A.M."/>
            <person name="Wu H.C."/>
            <person name="Kim C.J."/>
            <person name="Nguyen M."/>
            <person name="Pham P.K."/>
            <person name="Cheuk R.F."/>
            <person name="Karlin-Newmann G."/>
            <person name="Liu S.X."/>
            <person name="Lam B."/>
            <person name="Sakano H."/>
            <person name="Wu T."/>
            <person name="Yu G."/>
            <person name="Miranda M."/>
            <person name="Quach H.L."/>
            <person name="Tripp M."/>
            <person name="Chang C.H."/>
            <person name="Lee J.M."/>
            <person name="Toriumi M.J."/>
            <person name="Chan M.M."/>
            <person name="Tang C.C."/>
            <person name="Onodera C.S."/>
            <person name="Deng J.M."/>
            <person name="Akiyama K."/>
            <person name="Ansari Y."/>
            <person name="Arakawa T."/>
            <person name="Banh J."/>
            <person name="Banno F."/>
            <person name="Bowser L."/>
            <person name="Brooks S.Y."/>
            <person name="Carninci P."/>
            <person name="Chao Q."/>
            <person name="Choy N."/>
            <person name="Enju A."/>
            <person name="Goldsmith A.D."/>
            <person name="Gurjal M."/>
            <person name="Hansen N.F."/>
            <person name="Hayashizaki Y."/>
            <person name="Johnson-Hopson C."/>
            <person name="Hsuan V.W."/>
            <person name="Iida K."/>
            <person name="Karnes M."/>
            <person name="Khan S."/>
            <person name="Koesema E."/>
            <person name="Ishida J."/>
            <person name="Jiang P.X."/>
            <person name="Jones T."/>
            <person name="Kawai J."/>
            <person name="Kamiya A."/>
            <person name="Meyers C."/>
            <person name="Nakajima M."/>
            <person name="Narusaka M."/>
            <person name="Seki M."/>
            <person name="Sakurai T."/>
            <person name="Satou M."/>
            <person name="Tamse R."/>
            <person name="Vaysberg M."/>
            <person name="Wallender E.K."/>
            <person name="Wong C."/>
            <person name="Yamamura Y."/>
            <person name="Yuan S."/>
            <person name="Shinozaki K."/>
            <person name="Davis R.W."/>
            <person name="Theologis A."/>
            <person name="Ecker J.R."/>
        </authorList>
    </citation>
    <scope>NUCLEOTIDE SEQUENCE [LARGE SCALE MRNA]</scope>
    <source>
        <strain>cv. Columbia</strain>
    </source>
</reference>
<reference key="5">
    <citation type="submission" date="1993-09" db="EMBL/GenBank/DDBJ databases">
        <title>The Arabidopsis thaliana transcribed genome: the GDR cDNA program.</title>
        <authorList>
            <person name="Desprez T."/>
            <person name="Amselem J."/>
            <person name="Chiapello H."/>
            <person name="Caboche M."/>
            <person name="Hoefte H."/>
        </authorList>
    </citation>
    <scope>NUCLEOTIDE SEQUENCE [LARGE SCALE MRNA] OF 287-353</scope>
    <source>
        <strain>cv. Columbia</strain>
        <tissue>Seedling</tissue>
    </source>
</reference>
<reference key="6">
    <citation type="journal article" date="2004" name="Prog. Lipid Res.">
        <title>GDSL family of serine esterases/lipases.</title>
        <authorList>
            <person name="Akoh C.C."/>
            <person name="Lee G.-C."/>
            <person name="Liaw Y.-C."/>
            <person name="Huang T.-H."/>
            <person name="Shaw J.-F."/>
        </authorList>
    </citation>
    <scope>REVIEW</scope>
</reference>
<reference key="7">
    <citation type="journal article" date="2008" name="Pak. J. Biol. Sci.">
        <title>Sequence analysis of GDSL lipase gene family in Arabidopsis thaliana.</title>
        <authorList>
            <person name="Ling H."/>
        </authorList>
    </citation>
    <scope>GENE FAMILY</scope>
</reference>
<keyword id="KW-0325">Glycoprotein</keyword>
<keyword id="KW-0378">Hydrolase</keyword>
<keyword id="KW-0442">Lipid degradation</keyword>
<keyword id="KW-0443">Lipid metabolism</keyword>
<keyword id="KW-1185">Reference proteome</keyword>
<keyword id="KW-0964">Secreted</keyword>
<keyword id="KW-0732">Signal</keyword>
<evidence type="ECO:0000250" key="1"/>
<evidence type="ECO:0000255" key="2"/>
<evidence type="ECO:0000305" key="3"/>
<feature type="signal peptide" evidence="2">
    <location>
        <begin position="1"/>
        <end position="25"/>
    </location>
</feature>
<feature type="chain" id="PRO_0000367325" description="GDSL esterase/lipase APG">
    <location>
        <begin position="26"/>
        <end position="353"/>
    </location>
</feature>
<feature type="active site" description="Nucleophile" evidence="1">
    <location>
        <position position="37"/>
    </location>
</feature>
<feature type="active site" evidence="1">
    <location>
        <position position="328"/>
    </location>
</feature>
<feature type="active site" evidence="1">
    <location>
        <position position="331"/>
    </location>
</feature>
<feature type="glycosylation site" description="N-linked (GlcNAc...) asparagine" evidence="2">
    <location>
        <position position="197"/>
    </location>
</feature>
<feature type="glycosylation site" description="N-linked (GlcNAc...) asparagine" evidence="2">
    <location>
        <position position="320"/>
    </location>
</feature>
<organism>
    <name type="scientific">Arabidopsis thaliana</name>
    <name type="common">Mouse-ear cress</name>
    <dbReference type="NCBI Taxonomy" id="3702"/>
    <lineage>
        <taxon>Eukaryota</taxon>
        <taxon>Viridiplantae</taxon>
        <taxon>Streptophyta</taxon>
        <taxon>Embryophyta</taxon>
        <taxon>Tracheophyta</taxon>
        <taxon>Spermatophyta</taxon>
        <taxon>Magnoliopsida</taxon>
        <taxon>eudicotyledons</taxon>
        <taxon>Gunneridae</taxon>
        <taxon>Pentapetalae</taxon>
        <taxon>rosids</taxon>
        <taxon>malvids</taxon>
        <taxon>Brassicales</taxon>
        <taxon>Brassicaceae</taxon>
        <taxon>Camelineae</taxon>
        <taxon>Arabidopsis</taxon>
    </lineage>
</organism>
<gene>
    <name type="primary">APG</name>
    <name type="ordered locus">At3g16370</name>
    <name type="ORF">MYA6.18</name>
    <name type="ORF">T2O4.2</name>
</gene>
<comment type="subcellular location">
    <subcellularLocation>
        <location evidence="3">Secreted</location>
    </subcellularLocation>
</comment>
<comment type="similarity">
    <text evidence="3">Belongs to the 'GDSL' lipolytic enzyme family.</text>
</comment>
<comment type="sequence caution" evidence="3">
    <conflict type="erroneous initiation">
        <sequence resource="EMBL-CDS" id="AAB63641"/>
    </conflict>
</comment>
<name>APG2_ARATH</name>
<accession>Q9LU14</accession>
<accession>O04320</accession>
<accession>Q42118</accession>
<proteinExistence type="evidence at transcript level"/>
<sequence>MDRCTSSFLLLTLVSTLSILQISFAQLVPAIMTFGDSVVDVGNNNYLPTLFRADYPPYGRDFANHKATGRFCNGKLATDITAETLGFTKYPPAYLSPEASGKNLLIGANFASAASGYDDKAALLNHAIPLYQQVEYFKEYKSKLIKIAGSKKADSIIKGAICLLSAGSSDFVQNYYVNPLLYKVYTVDAYGSFLIDNFSTFIKQVYAVGARKIGVTSLPPTGCLPAARTLFGFHEKGCVSRLNTDAQNFNKKLNAAASKLQKQYSDLKIVVFDIYSPLYDLVQNPSKSGFTEATKGCCGTGTVETTSLLCNPKSFGTCSNATQYVFWDSVHPSEAANEILATALIGQGFSLLG</sequence>